<accession>A7H4J7</accession>
<name>HEM3_CAMJD</name>
<protein>
    <recommendedName>
        <fullName evidence="1">Porphobilinogen deaminase</fullName>
        <shortName evidence="1">PBG</shortName>
        <ecNumber evidence="1">2.5.1.61</ecNumber>
    </recommendedName>
    <alternativeName>
        <fullName evidence="1">Hydroxymethylbilane synthase</fullName>
        <shortName evidence="1">HMBS</shortName>
    </alternativeName>
    <alternativeName>
        <fullName evidence="1">Pre-uroporphyrinogen synthase</fullName>
    </alternativeName>
</protein>
<keyword id="KW-0627">Porphyrin biosynthesis</keyword>
<keyword id="KW-0808">Transferase</keyword>
<comment type="function">
    <text evidence="1">Tetrapolymerization of the monopyrrole PBG into the hydroxymethylbilane pre-uroporphyrinogen in several discrete steps.</text>
</comment>
<comment type="catalytic activity">
    <reaction evidence="1">
        <text>4 porphobilinogen + H2O = hydroxymethylbilane + 4 NH4(+)</text>
        <dbReference type="Rhea" id="RHEA:13185"/>
        <dbReference type="ChEBI" id="CHEBI:15377"/>
        <dbReference type="ChEBI" id="CHEBI:28938"/>
        <dbReference type="ChEBI" id="CHEBI:57845"/>
        <dbReference type="ChEBI" id="CHEBI:58126"/>
        <dbReference type="EC" id="2.5.1.61"/>
    </reaction>
</comment>
<comment type="cofactor">
    <cofactor evidence="1">
        <name>dipyrromethane</name>
        <dbReference type="ChEBI" id="CHEBI:60342"/>
    </cofactor>
    <text evidence="1">Binds 1 dipyrromethane group covalently.</text>
</comment>
<comment type="pathway">
    <text evidence="1">Porphyrin-containing compound metabolism; protoporphyrin-IX biosynthesis; coproporphyrinogen-III from 5-aminolevulinate: step 2/4.</text>
</comment>
<comment type="subunit">
    <text evidence="1">Monomer.</text>
</comment>
<comment type="miscellaneous">
    <text evidence="1">The porphobilinogen subunits are added to the dipyrromethane group.</text>
</comment>
<comment type="similarity">
    <text evidence="1">Belongs to the HMBS family.</text>
</comment>
<proteinExistence type="inferred from homology"/>
<evidence type="ECO:0000255" key="1">
    <source>
        <dbReference type="HAMAP-Rule" id="MF_00260"/>
    </source>
</evidence>
<gene>
    <name evidence="1" type="primary">hemC</name>
    <name type="ordered locus">JJD26997_1385</name>
</gene>
<feature type="chain" id="PRO_1000047743" description="Porphobilinogen deaminase">
    <location>
        <begin position="1"/>
        <end position="307"/>
    </location>
</feature>
<feature type="modified residue" description="S-(dipyrrolylmethanemethyl)cysteine" evidence="1">
    <location>
        <position position="239"/>
    </location>
</feature>
<organism>
    <name type="scientific">Campylobacter jejuni subsp. doylei (strain ATCC BAA-1458 / RM4099 / 269.97)</name>
    <dbReference type="NCBI Taxonomy" id="360109"/>
    <lineage>
        <taxon>Bacteria</taxon>
        <taxon>Pseudomonadati</taxon>
        <taxon>Campylobacterota</taxon>
        <taxon>Epsilonproteobacteria</taxon>
        <taxon>Campylobacterales</taxon>
        <taxon>Campylobacteraceae</taxon>
        <taxon>Campylobacter</taxon>
    </lineage>
</organism>
<sequence>MKLIIATRKSQLALWQSEHVAQILKNTHQIEVLLEGFKTKGDVLLDSPLAKIGGKGLFTKELEESMLRKEAHLAVHSLKDVPSFFPQGLVLAAVSKREQSTDAMLSQNYKDFLSLPKGAKIGTTSLRRKMQLLLLRPDLEIISLRGNVNSRIEKLKNNEFDAIILAMAGIKRLNLDKQVNFVYEFSKDELIPAASQGALGIESIKDEKILELLKCLNDENALIETSIEREFIATLEGGCQVPIGINAELLGDEICVRAVLGLPDGSEILKDKRMIKKNDFKGFGEGLAKEFITKGAKELLKKAESII</sequence>
<dbReference type="EC" id="2.5.1.61" evidence="1"/>
<dbReference type="EMBL" id="CP000768">
    <property type="protein sequence ID" value="ABS44808.1"/>
    <property type="molecule type" value="Genomic_DNA"/>
</dbReference>
<dbReference type="SMR" id="A7H4J7"/>
<dbReference type="KEGG" id="cjd:JJD26997_1385"/>
<dbReference type="HOGENOM" id="CLU_019704_1_0_7"/>
<dbReference type="UniPathway" id="UPA00251">
    <property type="reaction ID" value="UER00319"/>
</dbReference>
<dbReference type="Proteomes" id="UP000002302">
    <property type="component" value="Chromosome"/>
</dbReference>
<dbReference type="GO" id="GO:0005737">
    <property type="term" value="C:cytoplasm"/>
    <property type="evidence" value="ECO:0007669"/>
    <property type="project" value="TreeGrafter"/>
</dbReference>
<dbReference type="GO" id="GO:0004418">
    <property type="term" value="F:hydroxymethylbilane synthase activity"/>
    <property type="evidence" value="ECO:0007669"/>
    <property type="project" value="UniProtKB-UniRule"/>
</dbReference>
<dbReference type="GO" id="GO:0006782">
    <property type="term" value="P:protoporphyrinogen IX biosynthetic process"/>
    <property type="evidence" value="ECO:0007669"/>
    <property type="project" value="UniProtKB-UniRule"/>
</dbReference>
<dbReference type="CDD" id="cd13646">
    <property type="entry name" value="PBP2_EcHMBS_like"/>
    <property type="match status" value="1"/>
</dbReference>
<dbReference type="FunFam" id="3.40.190.10:FF:000004">
    <property type="entry name" value="Porphobilinogen deaminase"/>
    <property type="match status" value="1"/>
</dbReference>
<dbReference type="FunFam" id="3.40.190.10:FF:000005">
    <property type="entry name" value="Porphobilinogen deaminase"/>
    <property type="match status" value="1"/>
</dbReference>
<dbReference type="Gene3D" id="3.40.190.10">
    <property type="entry name" value="Periplasmic binding protein-like II"/>
    <property type="match status" value="2"/>
</dbReference>
<dbReference type="Gene3D" id="3.30.160.40">
    <property type="entry name" value="Porphobilinogen deaminase, C-terminal domain"/>
    <property type="match status" value="1"/>
</dbReference>
<dbReference type="HAMAP" id="MF_00260">
    <property type="entry name" value="Porphobil_deam"/>
    <property type="match status" value="1"/>
</dbReference>
<dbReference type="InterPro" id="IPR000860">
    <property type="entry name" value="HemC"/>
</dbReference>
<dbReference type="InterPro" id="IPR022419">
    <property type="entry name" value="Porphobilin_deaminase_cofac_BS"/>
</dbReference>
<dbReference type="InterPro" id="IPR022417">
    <property type="entry name" value="Porphobilin_deaminase_N"/>
</dbReference>
<dbReference type="InterPro" id="IPR022418">
    <property type="entry name" value="Porphobilinogen_deaminase_C"/>
</dbReference>
<dbReference type="InterPro" id="IPR036803">
    <property type="entry name" value="Porphobilinogen_deaminase_C_sf"/>
</dbReference>
<dbReference type="NCBIfam" id="TIGR00212">
    <property type="entry name" value="hemC"/>
    <property type="match status" value="1"/>
</dbReference>
<dbReference type="PANTHER" id="PTHR11557">
    <property type="entry name" value="PORPHOBILINOGEN DEAMINASE"/>
    <property type="match status" value="1"/>
</dbReference>
<dbReference type="PANTHER" id="PTHR11557:SF0">
    <property type="entry name" value="PORPHOBILINOGEN DEAMINASE"/>
    <property type="match status" value="1"/>
</dbReference>
<dbReference type="Pfam" id="PF01379">
    <property type="entry name" value="Porphobil_deam"/>
    <property type="match status" value="1"/>
</dbReference>
<dbReference type="Pfam" id="PF03900">
    <property type="entry name" value="Porphobil_deamC"/>
    <property type="match status" value="1"/>
</dbReference>
<dbReference type="PIRSF" id="PIRSF001438">
    <property type="entry name" value="4pyrrol_synth_OHMeBilane_synth"/>
    <property type="match status" value="1"/>
</dbReference>
<dbReference type="PRINTS" id="PR00151">
    <property type="entry name" value="PORPHBDMNASE"/>
</dbReference>
<dbReference type="SUPFAM" id="SSF53850">
    <property type="entry name" value="Periplasmic binding protein-like II"/>
    <property type="match status" value="1"/>
</dbReference>
<dbReference type="SUPFAM" id="SSF54782">
    <property type="entry name" value="Porphobilinogen deaminase (hydroxymethylbilane synthase), C-terminal domain"/>
    <property type="match status" value="1"/>
</dbReference>
<dbReference type="PROSITE" id="PS00533">
    <property type="entry name" value="PORPHOBILINOGEN_DEAM"/>
    <property type="match status" value="1"/>
</dbReference>
<reference key="1">
    <citation type="submission" date="2007-07" db="EMBL/GenBank/DDBJ databases">
        <title>Complete genome sequence of Campylobacter jejuni subsp doylei 269.97 isolated from human blood.</title>
        <authorList>
            <person name="Fouts D.E."/>
            <person name="Mongodin E.F."/>
            <person name="Puiu D."/>
            <person name="Sebastian Y."/>
            <person name="Miller W.G."/>
            <person name="Mandrell R.E."/>
            <person name="Lastovica A.J."/>
            <person name="Nelson K.E."/>
        </authorList>
    </citation>
    <scope>NUCLEOTIDE SEQUENCE [LARGE SCALE GENOMIC DNA]</scope>
    <source>
        <strain>ATCC BAA-1458 / RM4099 / 269.97</strain>
    </source>
</reference>